<evidence type="ECO:0000255" key="1">
    <source>
        <dbReference type="HAMAP-Rule" id="MF_01307"/>
    </source>
</evidence>
<evidence type="ECO:0000305" key="2"/>
<sequence>MGVRNIERLIEQRIKENPINPDILNLEEKVVEIRRTTRVMEGGRRFSFSTLAIVGDRNGHVGFGHGKAREVPPSIAKAIADAKKRIIKVALIEGTVPHDVYGEYDSAVVLLKPARRGTGVVAGGPMRPVLELLGVTDVLAKIVGRTTNPNAVVRATFDALLKLKSPEEVAKVRGLEEEKIKSVYRIYAGGVPVR</sequence>
<gene>
    <name evidence="1" type="primary">rpsE</name>
    <name type="ordered locus">SYO3AOP1_0274</name>
</gene>
<feature type="chain" id="PRO_1000140896" description="Small ribosomal subunit protein uS5">
    <location>
        <begin position="1"/>
        <end position="194"/>
    </location>
</feature>
<feature type="domain" description="S5 DRBM" evidence="1">
    <location>
        <begin position="26"/>
        <end position="89"/>
    </location>
</feature>
<proteinExistence type="inferred from homology"/>
<name>RS5_SULSY</name>
<reference key="1">
    <citation type="journal article" date="2009" name="J. Bacteriol.">
        <title>Complete and draft genome sequences of six members of the Aquificales.</title>
        <authorList>
            <person name="Reysenbach A.-L."/>
            <person name="Hamamura N."/>
            <person name="Podar M."/>
            <person name="Griffiths E."/>
            <person name="Ferreira S."/>
            <person name="Hochstein R."/>
            <person name="Heidelberg J."/>
            <person name="Johnson J."/>
            <person name="Mead D."/>
            <person name="Pohorille A."/>
            <person name="Sarmiento M."/>
            <person name="Schweighofer K."/>
            <person name="Seshadri R."/>
            <person name="Voytek M.A."/>
        </authorList>
    </citation>
    <scope>NUCLEOTIDE SEQUENCE [LARGE SCALE GENOMIC DNA]</scope>
    <source>
        <strain>YO3AOP1</strain>
    </source>
</reference>
<protein>
    <recommendedName>
        <fullName evidence="1">Small ribosomal subunit protein uS5</fullName>
    </recommendedName>
    <alternativeName>
        <fullName evidence="2">30S ribosomal protein S5</fullName>
    </alternativeName>
</protein>
<accession>B2V7J6</accession>
<organism>
    <name type="scientific">Sulfurihydrogenibium sp. (strain YO3AOP1)</name>
    <dbReference type="NCBI Taxonomy" id="436114"/>
    <lineage>
        <taxon>Bacteria</taxon>
        <taxon>Pseudomonadati</taxon>
        <taxon>Aquificota</taxon>
        <taxon>Aquificia</taxon>
        <taxon>Aquificales</taxon>
        <taxon>Hydrogenothermaceae</taxon>
        <taxon>Sulfurihydrogenibium</taxon>
    </lineage>
</organism>
<comment type="function">
    <text evidence="1">With S4 and S12 plays an important role in translational accuracy.</text>
</comment>
<comment type="function">
    <text evidence="1">Located at the back of the 30S subunit body where it stabilizes the conformation of the head with respect to the body.</text>
</comment>
<comment type="subunit">
    <text evidence="1">Part of the 30S ribosomal subunit. Contacts proteins S4 and S8.</text>
</comment>
<comment type="domain">
    <text>The N-terminal domain interacts with the head of the 30S subunit; the C-terminal domain interacts with the body and contacts protein S4. The interaction surface between S4 and S5 is involved in control of translational fidelity.</text>
</comment>
<comment type="similarity">
    <text evidence="1">Belongs to the universal ribosomal protein uS5 family.</text>
</comment>
<keyword id="KW-0687">Ribonucleoprotein</keyword>
<keyword id="KW-0689">Ribosomal protein</keyword>
<keyword id="KW-0694">RNA-binding</keyword>
<keyword id="KW-0699">rRNA-binding</keyword>
<dbReference type="EMBL" id="CP001080">
    <property type="protein sequence ID" value="ACD65919.1"/>
    <property type="molecule type" value="Genomic_DNA"/>
</dbReference>
<dbReference type="RefSeq" id="WP_012459008.1">
    <property type="nucleotide sequence ID" value="NC_010730.1"/>
</dbReference>
<dbReference type="SMR" id="B2V7J6"/>
<dbReference type="STRING" id="436114.SYO3AOP1_0274"/>
<dbReference type="KEGG" id="sul:SYO3AOP1_0274"/>
<dbReference type="eggNOG" id="COG0098">
    <property type="taxonomic scope" value="Bacteria"/>
</dbReference>
<dbReference type="HOGENOM" id="CLU_065898_2_2_0"/>
<dbReference type="GO" id="GO:0015935">
    <property type="term" value="C:small ribosomal subunit"/>
    <property type="evidence" value="ECO:0007669"/>
    <property type="project" value="InterPro"/>
</dbReference>
<dbReference type="GO" id="GO:0019843">
    <property type="term" value="F:rRNA binding"/>
    <property type="evidence" value="ECO:0007669"/>
    <property type="project" value="UniProtKB-UniRule"/>
</dbReference>
<dbReference type="GO" id="GO:0003735">
    <property type="term" value="F:structural constituent of ribosome"/>
    <property type="evidence" value="ECO:0007669"/>
    <property type="project" value="InterPro"/>
</dbReference>
<dbReference type="GO" id="GO:0006412">
    <property type="term" value="P:translation"/>
    <property type="evidence" value="ECO:0007669"/>
    <property type="project" value="UniProtKB-UniRule"/>
</dbReference>
<dbReference type="FunFam" id="3.30.230.10:FF:000002">
    <property type="entry name" value="30S ribosomal protein S5"/>
    <property type="match status" value="1"/>
</dbReference>
<dbReference type="Gene3D" id="3.30.160.20">
    <property type="match status" value="1"/>
</dbReference>
<dbReference type="Gene3D" id="3.30.230.10">
    <property type="match status" value="1"/>
</dbReference>
<dbReference type="HAMAP" id="MF_01307_B">
    <property type="entry name" value="Ribosomal_uS5_B"/>
    <property type="match status" value="1"/>
</dbReference>
<dbReference type="InterPro" id="IPR020568">
    <property type="entry name" value="Ribosomal_Su5_D2-typ_SF"/>
</dbReference>
<dbReference type="InterPro" id="IPR000851">
    <property type="entry name" value="Ribosomal_uS5"/>
</dbReference>
<dbReference type="InterPro" id="IPR005712">
    <property type="entry name" value="Ribosomal_uS5_bac-type"/>
</dbReference>
<dbReference type="InterPro" id="IPR005324">
    <property type="entry name" value="Ribosomal_uS5_C"/>
</dbReference>
<dbReference type="InterPro" id="IPR013810">
    <property type="entry name" value="Ribosomal_uS5_N"/>
</dbReference>
<dbReference type="InterPro" id="IPR018192">
    <property type="entry name" value="Ribosomal_uS5_N_CS"/>
</dbReference>
<dbReference type="InterPro" id="IPR014721">
    <property type="entry name" value="Ribsml_uS5_D2-typ_fold_subgr"/>
</dbReference>
<dbReference type="NCBIfam" id="TIGR01021">
    <property type="entry name" value="rpsE_bact"/>
    <property type="match status" value="1"/>
</dbReference>
<dbReference type="PANTHER" id="PTHR48277">
    <property type="entry name" value="MITOCHONDRIAL RIBOSOMAL PROTEIN S5"/>
    <property type="match status" value="1"/>
</dbReference>
<dbReference type="PANTHER" id="PTHR48277:SF1">
    <property type="entry name" value="MITOCHONDRIAL RIBOSOMAL PROTEIN S5"/>
    <property type="match status" value="1"/>
</dbReference>
<dbReference type="Pfam" id="PF00333">
    <property type="entry name" value="Ribosomal_S5"/>
    <property type="match status" value="1"/>
</dbReference>
<dbReference type="Pfam" id="PF03719">
    <property type="entry name" value="Ribosomal_S5_C"/>
    <property type="match status" value="1"/>
</dbReference>
<dbReference type="SUPFAM" id="SSF54768">
    <property type="entry name" value="dsRNA-binding domain-like"/>
    <property type="match status" value="1"/>
</dbReference>
<dbReference type="SUPFAM" id="SSF54211">
    <property type="entry name" value="Ribosomal protein S5 domain 2-like"/>
    <property type="match status" value="1"/>
</dbReference>
<dbReference type="PROSITE" id="PS00585">
    <property type="entry name" value="RIBOSOMAL_S5"/>
    <property type="match status" value="1"/>
</dbReference>
<dbReference type="PROSITE" id="PS50881">
    <property type="entry name" value="S5_DSRBD"/>
    <property type="match status" value="1"/>
</dbReference>